<gene>
    <name type="primary">thr</name>
    <name type="ORF">GA19126</name>
</gene>
<name>THR_DROPS</name>
<evidence type="ECO:0000250" key="1"/>
<evidence type="ECO:0000250" key="2">
    <source>
        <dbReference type="UniProtKB" id="P42286"/>
    </source>
</evidence>
<evidence type="ECO:0000256" key="3">
    <source>
        <dbReference type="SAM" id="MobiDB-lite"/>
    </source>
</evidence>
<evidence type="ECO:0000305" key="4"/>
<evidence type="ECO:0000312" key="5">
    <source>
        <dbReference type="EMBL" id="AAQ72553.1"/>
    </source>
</evidence>
<protein>
    <recommendedName>
        <fullName>Protein three rows</fullName>
    </recommendedName>
</protein>
<feature type="chain" id="PRO_0000072527" description="Protein three rows">
    <location>
        <begin position="1"/>
        <end position="1409"/>
    </location>
</feature>
<feature type="region of interest" description="Separase cleavage-site" evidence="2">
    <location>
        <begin position="1052"/>
        <end position="1058"/>
    </location>
</feature>
<feature type="region of interest" description="Disordered" evidence="3">
    <location>
        <begin position="1260"/>
        <end position="1284"/>
    </location>
</feature>
<feature type="region of interest" description="Disordered" evidence="3">
    <location>
        <begin position="1297"/>
        <end position="1409"/>
    </location>
</feature>
<feature type="compositionally biased region" description="Low complexity" evidence="3">
    <location>
        <begin position="1264"/>
        <end position="1273"/>
    </location>
</feature>
<feature type="compositionally biased region" description="Low complexity" evidence="3">
    <location>
        <begin position="1300"/>
        <end position="1310"/>
    </location>
</feature>
<feature type="sequence conflict" description="In Ref. 1; AAQ72553." evidence="4" ref="1">
    <original>K</original>
    <variation>R</variation>
    <location>
        <position position="107"/>
    </location>
</feature>
<feature type="sequence conflict" description="In Ref. 1; AAQ72553." evidence="4" ref="1">
    <original>M</original>
    <variation>I</variation>
    <location>
        <position position="115"/>
    </location>
</feature>
<feature type="sequence conflict" description="In Ref. 1; AAQ72553." evidence="4" ref="1">
    <original>E</original>
    <variation>Q</variation>
    <location>
        <position position="162"/>
    </location>
</feature>
<feature type="sequence conflict" description="In Ref. 1; AAQ72553." evidence="4" ref="1">
    <original>S</original>
    <variation>C</variation>
    <location>
        <position position="465"/>
    </location>
</feature>
<feature type="sequence conflict" description="In Ref. 1; AAQ72553." evidence="4" ref="1">
    <original>T</original>
    <variation>Q</variation>
    <location>
        <position position="730"/>
    </location>
</feature>
<feature type="sequence conflict" description="In Ref. 1; AAQ72553." evidence="4" ref="1">
    <original>M</original>
    <variation>T</variation>
    <location>
        <position position="762"/>
    </location>
</feature>
<feature type="sequence conflict" description="In Ref. 1; AAQ72553." evidence="4" ref="1">
    <original>S</original>
    <variation>C</variation>
    <location>
        <position position="878"/>
    </location>
</feature>
<feature type="sequence conflict" description="In Ref. 1; AAQ72553." evidence="4" ref="1">
    <original>V</original>
    <variation>M</variation>
    <location>
        <position position="1085"/>
    </location>
</feature>
<feature type="sequence conflict" description="In Ref. 1; AAQ72553." evidence="4" ref="1">
    <original>I</original>
    <variation>T</variation>
    <location>
        <position position="1237"/>
    </location>
</feature>
<feature type="sequence conflict" description="In Ref. 1; AAQ72553." evidence="4" ref="1">
    <original>A</original>
    <variation>T</variation>
    <location>
        <position position="1328"/>
    </location>
</feature>
<feature type="sequence conflict" description="In Ref. 1; AAQ72553." evidence="4" ref="1">
    <original>S</original>
    <variation>T</variation>
    <location>
        <position position="1369"/>
    </location>
</feature>
<feature type="sequence conflict" description="In Ref. 1; AAQ72553." evidence="4" ref="1">
    <original>P</original>
    <variation>R</variation>
    <location>
        <position position="1405"/>
    </location>
</feature>
<reference evidence="5" key="1">
    <citation type="journal article" date="2004" name="Cell Cycle">
        <title>Structure predictions and interaction studies indicate homology of separase N-terminal regulatory domains and Drosophila THR.</title>
        <authorList>
            <person name="Jaeger H."/>
            <person name="Herzig B."/>
            <person name="Herzig A."/>
            <person name="Sticht H."/>
            <person name="Lehner C.F."/>
            <person name="Heidmann S."/>
        </authorList>
    </citation>
    <scope>NUCLEOTIDE SEQUENCE [GENOMIC DNA]</scope>
</reference>
<reference key="2">
    <citation type="journal article" date="2005" name="Genome Res.">
        <title>Comparative genome sequencing of Drosophila pseudoobscura: chromosomal, gene, and cis-element evolution.</title>
        <authorList>
            <person name="Richards S."/>
            <person name="Liu Y."/>
            <person name="Bettencourt B.R."/>
            <person name="Hradecky P."/>
            <person name="Letovsky S."/>
            <person name="Nielsen R."/>
            <person name="Thornton K."/>
            <person name="Hubisz M.J."/>
            <person name="Chen R."/>
            <person name="Meisel R.P."/>
            <person name="Couronne O."/>
            <person name="Hua S."/>
            <person name="Smith M.A."/>
            <person name="Zhang P."/>
            <person name="Liu J."/>
            <person name="Bussemaker H.J."/>
            <person name="van Batenburg M.F."/>
            <person name="Howells S.L."/>
            <person name="Scherer S.E."/>
            <person name="Sodergren E."/>
            <person name="Matthews B.B."/>
            <person name="Crosby M.A."/>
            <person name="Schroeder A.J."/>
            <person name="Ortiz-Barrientos D."/>
            <person name="Rives C.M."/>
            <person name="Metzker M.L."/>
            <person name="Muzny D.M."/>
            <person name="Scott G."/>
            <person name="Steffen D."/>
            <person name="Wheeler D.A."/>
            <person name="Worley K.C."/>
            <person name="Havlak P."/>
            <person name="Durbin K.J."/>
            <person name="Egan A."/>
            <person name="Gill R."/>
            <person name="Hume J."/>
            <person name="Morgan M.B."/>
            <person name="Miner G."/>
            <person name="Hamilton C."/>
            <person name="Huang Y."/>
            <person name="Waldron L."/>
            <person name="Verduzco D."/>
            <person name="Clerc-Blankenburg K.P."/>
            <person name="Dubchak I."/>
            <person name="Noor M.A.F."/>
            <person name="Anderson W."/>
            <person name="White K.P."/>
            <person name="Clark A.G."/>
            <person name="Schaeffer S.W."/>
            <person name="Gelbart W.M."/>
            <person name="Weinstock G.M."/>
            <person name="Gibbs R.A."/>
        </authorList>
    </citation>
    <scope>NUCLEOTIDE SEQUENCE [LARGE SCALE GENOMIC DNA]</scope>
    <source>
        <strain>MV2-25 / Tucson 14011-0121.94</strain>
    </source>
</reference>
<accession>Q6V3W0</accession>
<accession>Q28XE3</accession>
<proteinExistence type="inferred from homology"/>
<keyword id="KW-0131">Cell cycle</keyword>
<keyword id="KW-0132">Cell division</keyword>
<keyword id="KW-0963">Cytoplasm</keyword>
<keyword id="KW-0217">Developmental protein</keyword>
<keyword id="KW-0498">Mitosis</keyword>
<keyword id="KW-1185">Reference proteome</keyword>
<comment type="function">
    <text evidence="2">Required specifically for chromosome disjunction during all mitoses; maternally provided protein is sufficient until mitosis 14 then zygotic protein is required. Involved in formation and/or maintenance of epithelial structures: bud extension during Malpighian tubule development, and foregut and hindgut morphogenesis (By similarity).</text>
</comment>
<comment type="subunit">
    <text evidence="2">Interacts with pim and Sse. Cleavage of thr contributes to inactivation of Sse (By similarity).</text>
</comment>
<comment type="subcellular location">
    <subcellularLocation>
        <location evidence="1">Cytoplasm</location>
    </subcellularLocation>
</comment>
<organism>
    <name type="scientific">Drosophila pseudoobscura pseudoobscura</name>
    <name type="common">Fruit fly</name>
    <dbReference type="NCBI Taxonomy" id="46245"/>
    <lineage>
        <taxon>Eukaryota</taxon>
        <taxon>Metazoa</taxon>
        <taxon>Ecdysozoa</taxon>
        <taxon>Arthropoda</taxon>
        <taxon>Hexapoda</taxon>
        <taxon>Insecta</taxon>
        <taxon>Pterygota</taxon>
        <taxon>Neoptera</taxon>
        <taxon>Endopterygota</taxon>
        <taxon>Diptera</taxon>
        <taxon>Brachycera</taxon>
        <taxon>Muscomorpha</taxon>
        <taxon>Ephydroidea</taxon>
        <taxon>Drosophilidae</taxon>
        <taxon>Drosophila</taxon>
        <taxon>Sophophora</taxon>
    </lineage>
</organism>
<dbReference type="EMBL" id="AY352649">
    <property type="protein sequence ID" value="AAQ72553.1"/>
    <property type="molecule type" value="Genomic_DNA"/>
</dbReference>
<dbReference type="EMBL" id="CM000071">
    <property type="protein sequence ID" value="EAL26373.2"/>
    <property type="molecule type" value="Genomic_DNA"/>
</dbReference>
<dbReference type="SMR" id="Q6V3W0"/>
<dbReference type="FunCoup" id="Q6V3W0">
    <property type="interactions" value="2"/>
</dbReference>
<dbReference type="STRING" id="46245.Q6V3W0"/>
<dbReference type="eggNOG" id="ENOG502T8T7">
    <property type="taxonomic scope" value="Eukaryota"/>
</dbReference>
<dbReference type="InParanoid" id="Q6V3W0"/>
<dbReference type="Proteomes" id="UP000001819">
    <property type="component" value="Unplaced"/>
</dbReference>
<dbReference type="GO" id="GO:0005737">
    <property type="term" value="C:cytoplasm"/>
    <property type="evidence" value="ECO:0000250"/>
    <property type="project" value="UniProtKB"/>
</dbReference>
<dbReference type="GO" id="GO:0051301">
    <property type="term" value="P:cell division"/>
    <property type="evidence" value="ECO:0007669"/>
    <property type="project" value="UniProtKB-KW"/>
</dbReference>
<dbReference type="GO" id="GO:0007443">
    <property type="term" value="P:Malpighian tubule morphogenesis"/>
    <property type="evidence" value="ECO:0000250"/>
    <property type="project" value="UniProtKB"/>
</dbReference>
<dbReference type="GO" id="GO:0000070">
    <property type="term" value="P:mitotic sister chromatid segregation"/>
    <property type="evidence" value="ECO:0000250"/>
    <property type="project" value="UniProtKB"/>
</dbReference>
<sequence>MSADIVKQLKGTRSDVKAAATTIELKFKEFSKGIGINDASFPLRYELSVLRQLCLALKDNLHQHADLYCGIAATMLPHVEPYEEKPSLWEAHLTSLRYIHHGLCQEKSLTECQKMYGLIRSQPCRLQEEADYKFYLDIHLTHFNGIYLQMQKETLPLAATDELYYALEAMGVLFDTMHQRKVAKNAALLVQLNDSLFSKRSKAFLKYLSALPPESTTKMYDPLLKLLSCSWATPSSELTNQFTEYLGLVLALVQIDMFSIEAPLEQQLALKLLRICRDLYKDVSPQNYSIQLLYYYVKLMYVREATADFKQTYIDLCKKFVYFFEHKGATHAKEQWFMDLLVFFQRLQTLLHQSSNKPPLDIFWQQLEGDDSSEVYTAHFQLLHGCLGLAVNVVRSPLGTSCSNEACKSIRRHCLLYFGMCALEAYINWQPTTEQKADKAPYKPLLGILGYTLDVAKSMKCLGPSAMELVKLVRLLALVAEKVSCPEQMSLVLAFLEPLQHLRPLIASQDMLSVLRRIYKASVHCKSSDMANRLQSTYLAALTNPSRLRSQLFAHYHNANNTEKCVYEWHESSPMPNPLTPAQTKQLYDVDLLAVLHFLSAPPVPLLQSLLRCRHNDYHLALLARKMRTDSEVVRQCEELRSQLHSTALKQPLSRMQQLAIGHTSISVLLEALEAQKTKFSIKETAENCLEELIVKNNLLELNIKREHRLVELATSAIAGFAAFFERADTEPLGCDDTPIDWEALIDDAVAAAMALSTMGYMAQADEAWLLILRIGQMLDERFTYLRALTHFLGQDHLNSNQQLQLSEEVDRAQELLDDLWPQLQNGWFFKRQHTIVMLCLCHMASYYARQDCLCHAQLLLLQAEELRAQFDERVGKSDIVQITIQTVRFRLEYLRNKRCSSLPRRPTPLRQLDTLVDSVRNYCTVSSVDLGALQLLLADLVRESTECAANRLTERFAFYGTMLNLVLQSGMALRTIEVLISWLWMNLQMEYLDQAQSKLRLLDHLLAIKPLSRTLVEQTSATYVPAIAAKEDLKANAMSELTSNMLLMQLVEPIRKQNQMDVATIKSLPMHEPIPTSHQLQRYVSKQGTPPHLRDSMQLQCIYFIVGCLHARFSFLKRENDQLDDFYVGAGNWLQEDPVRTATLGSMLLVHELYHLNYLRFRKKHKEALSYAEAGLKSVYQTADINYSFNFMVQLKTARLELHPVGKARAKTIRRALAFNTSPEDKRRKGVVEGSIKAKSSARKTPRFKIYTELELRPPIGCSNSSSSSSKSGNENTPPSDHVDLNACQAIEISDDDAASVSASTPAPSQLKRSQSVPAKATKTRSARVGSQLKVPEIIELDDTMEETPSTSTAATVKRYPTTDARSSRARNRQLEETPATTRGRPRRKVPEPAPQQETVSLRPRQRN</sequence>